<comment type="function">
    <text evidence="1">Required for the first step of histidine biosynthesis. May allow the feedback regulation of ATP phosphoribosyltransferase activity by histidine.</text>
</comment>
<comment type="pathway">
    <text evidence="1">Amino-acid biosynthesis; L-histidine biosynthesis; L-histidine from 5-phospho-alpha-D-ribose 1-diphosphate: step 1/9.</text>
</comment>
<comment type="subunit">
    <text evidence="1">Heteromultimer composed of HisG and HisZ subunits.</text>
</comment>
<comment type="subcellular location">
    <subcellularLocation>
        <location evidence="1">Cytoplasm</location>
    </subcellularLocation>
</comment>
<comment type="miscellaneous">
    <text>This function is generally fulfilled by the C-terminal part of HisG, which is missing in some bacteria such as this one.</text>
</comment>
<comment type="similarity">
    <text evidence="1">Belongs to the class-II aminoacyl-tRNA synthetase family. HisZ subfamily.</text>
</comment>
<proteinExistence type="inferred from homology"/>
<protein>
    <recommendedName>
        <fullName evidence="1">ATP phosphoribosyltransferase regulatory subunit</fullName>
    </recommendedName>
</protein>
<organism>
    <name type="scientific">Anaeromyxobacter sp. (strain K)</name>
    <dbReference type="NCBI Taxonomy" id="447217"/>
    <lineage>
        <taxon>Bacteria</taxon>
        <taxon>Pseudomonadati</taxon>
        <taxon>Myxococcota</taxon>
        <taxon>Myxococcia</taxon>
        <taxon>Myxococcales</taxon>
        <taxon>Cystobacterineae</taxon>
        <taxon>Anaeromyxobacteraceae</taxon>
        <taxon>Anaeromyxobacter</taxon>
    </lineage>
</organism>
<sequence>MLDLSLPSGLRDLLPDHSAHLAELSSKLHDVFSRFGYRRVFLPTLERLDVVERGLSPAALADVMKFVEPGSGEVVAIRPDITPQIARLYAARPDALPSPARLCYDGPVLRAREARAGRPREVYQAGVELLGAGGASADAEALVLLARSLERVGLKAPRVEVGHARFAEAVMEAARLPERLRSAAWEALSRKDRAALAAAAAKGRGSAEAREAVPQLAGLFGDGALDRARAIARAVPEAAAPLAETEAALRIARRRGVREVAVDLGEARGLGYYTGITFAGYAPGAGAAVARGGRYDGLLARFGRPGPAIGFAVDLEFATQALERVNGRGRGVRPRRASARGGRARARPR</sequence>
<gene>
    <name evidence="1" type="primary">hisZ</name>
    <name type="ordered locus">AnaeK_2599</name>
</gene>
<accession>B4UGX0</accession>
<reference key="1">
    <citation type="submission" date="2008-08" db="EMBL/GenBank/DDBJ databases">
        <title>Complete sequence of Anaeromyxobacter sp. K.</title>
        <authorList>
            <consortium name="US DOE Joint Genome Institute"/>
            <person name="Lucas S."/>
            <person name="Copeland A."/>
            <person name="Lapidus A."/>
            <person name="Glavina del Rio T."/>
            <person name="Dalin E."/>
            <person name="Tice H."/>
            <person name="Bruce D."/>
            <person name="Goodwin L."/>
            <person name="Pitluck S."/>
            <person name="Saunders E."/>
            <person name="Brettin T."/>
            <person name="Detter J.C."/>
            <person name="Han C."/>
            <person name="Larimer F."/>
            <person name="Land M."/>
            <person name="Hauser L."/>
            <person name="Kyrpides N."/>
            <person name="Ovchinnikiva G."/>
            <person name="Beliaev A."/>
        </authorList>
    </citation>
    <scope>NUCLEOTIDE SEQUENCE [LARGE SCALE GENOMIC DNA]</scope>
    <source>
        <strain>K</strain>
    </source>
</reference>
<keyword id="KW-0028">Amino-acid biosynthesis</keyword>
<keyword id="KW-0963">Cytoplasm</keyword>
<keyword id="KW-0368">Histidine biosynthesis</keyword>
<name>HISZ_ANASK</name>
<feature type="chain" id="PRO_1000095443" description="ATP phosphoribosyltransferase regulatory subunit">
    <location>
        <begin position="1"/>
        <end position="349"/>
    </location>
</feature>
<feature type="region of interest" description="Disordered" evidence="2">
    <location>
        <begin position="327"/>
        <end position="349"/>
    </location>
</feature>
<feature type="compositionally biased region" description="Basic residues" evidence="2">
    <location>
        <begin position="330"/>
        <end position="349"/>
    </location>
</feature>
<dbReference type="EMBL" id="CP001131">
    <property type="protein sequence ID" value="ACG73824.1"/>
    <property type="molecule type" value="Genomic_DNA"/>
</dbReference>
<dbReference type="RefSeq" id="WP_012526606.1">
    <property type="nucleotide sequence ID" value="NC_011145.1"/>
</dbReference>
<dbReference type="SMR" id="B4UGX0"/>
<dbReference type="KEGG" id="ank:AnaeK_2599"/>
<dbReference type="HOGENOM" id="CLU_025113_0_3_7"/>
<dbReference type="OrthoDB" id="9800814at2"/>
<dbReference type="UniPathway" id="UPA00031">
    <property type="reaction ID" value="UER00006"/>
</dbReference>
<dbReference type="Proteomes" id="UP000001871">
    <property type="component" value="Chromosome"/>
</dbReference>
<dbReference type="GO" id="GO:0005737">
    <property type="term" value="C:cytoplasm"/>
    <property type="evidence" value="ECO:0007669"/>
    <property type="project" value="UniProtKB-SubCell"/>
</dbReference>
<dbReference type="GO" id="GO:0004821">
    <property type="term" value="F:histidine-tRNA ligase activity"/>
    <property type="evidence" value="ECO:0007669"/>
    <property type="project" value="TreeGrafter"/>
</dbReference>
<dbReference type="GO" id="GO:0006427">
    <property type="term" value="P:histidyl-tRNA aminoacylation"/>
    <property type="evidence" value="ECO:0007669"/>
    <property type="project" value="TreeGrafter"/>
</dbReference>
<dbReference type="GO" id="GO:0000105">
    <property type="term" value="P:L-histidine biosynthetic process"/>
    <property type="evidence" value="ECO:0007669"/>
    <property type="project" value="UniProtKB-UniRule"/>
</dbReference>
<dbReference type="CDD" id="cd00773">
    <property type="entry name" value="HisRS-like_core"/>
    <property type="match status" value="1"/>
</dbReference>
<dbReference type="Gene3D" id="3.30.930.10">
    <property type="entry name" value="Bira Bifunctional Protein, Domain 2"/>
    <property type="match status" value="1"/>
</dbReference>
<dbReference type="HAMAP" id="MF_00125">
    <property type="entry name" value="HisZ"/>
    <property type="match status" value="1"/>
</dbReference>
<dbReference type="InterPro" id="IPR006195">
    <property type="entry name" value="aa-tRNA-synth_II"/>
</dbReference>
<dbReference type="InterPro" id="IPR045864">
    <property type="entry name" value="aa-tRNA-synth_II/BPL/LPL"/>
</dbReference>
<dbReference type="InterPro" id="IPR041715">
    <property type="entry name" value="HisRS-like_core"/>
</dbReference>
<dbReference type="InterPro" id="IPR004516">
    <property type="entry name" value="HisRS/HisZ"/>
</dbReference>
<dbReference type="InterPro" id="IPR004517">
    <property type="entry name" value="HisZ"/>
</dbReference>
<dbReference type="NCBIfam" id="TIGR00443">
    <property type="entry name" value="hisZ_biosyn_reg"/>
    <property type="match status" value="1"/>
</dbReference>
<dbReference type="PANTHER" id="PTHR43707:SF1">
    <property type="entry name" value="HISTIDINE--TRNA LIGASE, MITOCHONDRIAL-RELATED"/>
    <property type="match status" value="1"/>
</dbReference>
<dbReference type="PANTHER" id="PTHR43707">
    <property type="entry name" value="HISTIDYL-TRNA SYNTHETASE"/>
    <property type="match status" value="1"/>
</dbReference>
<dbReference type="Pfam" id="PF13393">
    <property type="entry name" value="tRNA-synt_His"/>
    <property type="match status" value="1"/>
</dbReference>
<dbReference type="PIRSF" id="PIRSF001549">
    <property type="entry name" value="His-tRNA_synth"/>
    <property type="match status" value="1"/>
</dbReference>
<dbReference type="SUPFAM" id="SSF55681">
    <property type="entry name" value="Class II aaRS and biotin synthetases"/>
    <property type="match status" value="1"/>
</dbReference>
<dbReference type="PROSITE" id="PS50862">
    <property type="entry name" value="AA_TRNA_LIGASE_II"/>
    <property type="match status" value="1"/>
</dbReference>
<evidence type="ECO:0000255" key="1">
    <source>
        <dbReference type="HAMAP-Rule" id="MF_00125"/>
    </source>
</evidence>
<evidence type="ECO:0000256" key="2">
    <source>
        <dbReference type="SAM" id="MobiDB-lite"/>
    </source>
</evidence>